<proteinExistence type="inferred from homology"/>
<evidence type="ECO:0000255" key="1">
    <source>
        <dbReference type="HAMAP-Rule" id="MF_01345"/>
    </source>
</evidence>
<evidence type="ECO:0000305" key="2"/>
<sequence>MERNLRKKRLGRVVSDKMDKTIVVAVETKVRHPLYGKTVNRTTKFKAHDENNEARFGDRVLIMETRPLSKDKRWRLVEIVEKAK</sequence>
<feature type="chain" id="PRO_1000054943" description="Small ribosomal subunit protein uS17">
    <location>
        <begin position="1"/>
        <end position="84"/>
    </location>
</feature>
<dbReference type="EMBL" id="CP000246">
    <property type="protein sequence ID" value="ABG83878.1"/>
    <property type="molecule type" value="Genomic_DNA"/>
</dbReference>
<dbReference type="RefSeq" id="WP_003454312.1">
    <property type="nucleotide sequence ID" value="NC_008261.1"/>
</dbReference>
<dbReference type="SMR" id="Q0TMQ5"/>
<dbReference type="STRING" id="195103.CPF_2705"/>
<dbReference type="PaxDb" id="195103-CPF_2705"/>
<dbReference type="GeneID" id="93001018"/>
<dbReference type="KEGG" id="cpf:CPF_2705"/>
<dbReference type="eggNOG" id="COG0186">
    <property type="taxonomic scope" value="Bacteria"/>
</dbReference>
<dbReference type="HOGENOM" id="CLU_073626_1_0_9"/>
<dbReference type="Proteomes" id="UP000001823">
    <property type="component" value="Chromosome"/>
</dbReference>
<dbReference type="GO" id="GO:0022627">
    <property type="term" value="C:cytosolic small ribosomal subunit"/>
    <property type="evidence" value="ECO:0007669"/>
    <property type="project" value="TreeGrafter"/>
</dbReference>
<dbReference type="GO" id="GO:0019843">
    <property type="term" value="F:rRNA binding"/>
    <property type="evidence" value="ECO:0007669"/>
    <property type="project" value="UniProtKB-UniRule"/>
</dbReference>
<dbReference type="GO" id="GO:0003735">
    <property type="term" value="F:structural constituent of ribosome"/>
    <property type="evidence" value="ECO:0007669"/>
    <property type="project" value="InterPro"/>
</dbReference>
<dbReference type="GO" id="GO:0006412">
    <property type="term" value="P:translation"/>
    <property type="evidence" value="ECO:0007669"/>
    <property type="project" value="UniProtKB-UniRule"/>
</dbReference>
<dbReference type="CDD" id="cd00364">
    <property type="entry name" value="Ribosomal_uS17"/>
    <property type="match status" value="1"/>
</dbReference>
<dbReference type="FunFam" id="2.40.50.140:FF:000026">
    <property type="entry name" value="30S ribosomal protein S17"/>
    <property type="match status" value="1"/>
</dbReference>
<dbReference type="Gene3D" id="2.40.50.140">
    <property type="entry name" value="Nucleic acid-binding proteins"/>
    <property type="match status" value="1"/>
</dbReference>
<dbReference type="HAMAP" id="MF_01345_B">
    <property type="entry name" value="Ribosomal_uS17_B"/>
    <property type="match status" value="1"/>
</dbReference>
<dbReference type="InterPro" id="IPR012340">
    <property type="entry name" value="NA-bd_OB-fold"/>
</dbReference>
<dbReference type="InterPro" id="IPR000266">
    <property type="entry name" value="Ribosomal_uS17"/>
</dbReference>
<dbReference type="InterPro" id="IPR019984">
    <property type="entry name" value="Ribosomal_uS17_bact/chlr"/>
</dbReference>
<dbReference type="InterPro" id="IPR019979">
    <property type="entry name" value="Ribosomal_uS17_CS"/>
</dbReference>
<dbReference type="NCBIfam" id="NF004123">
    <property type="entry name" value="PRK05610.1"/>
    <property type="match status" value="1"/>
</dbReference>
<dbReference type="NCBIfam" id="TIGR03635">
    <property type="entry name" value="uS17_bact"/>
    <property type="match status" value="1"/>
</dbReference>
<dbReference type="PANTHER" id="PTHR10744">
    <property type="entry name" value="40S RIBOSOMAL PROTEIN S11 FAMILY MEMBER"/>
    <property type="match status" value="1"/>
</dbReference>
<dbReference type="PANTHER" id="PTHR10744:SF1">
    <property type="entry name" value="SMALL RIBOSOMAL SUBUNIT PROTEIN US17M"/>
    <property type="match status" value="1"/>
</dbReference>
<dbReference type="Pfam" id="PF00366">
    <property type="entry name" value="Ribosomal_S17"/>
    <property type="match status" value="1"/>
</dbReference>
<dbReference type="PRINTS" id="PR00973">
    <property type="entry name" value="RIBOSOMALS17"/>
</dbReference>
<dbReference type="SUPFAM" id="SSF50249">
    <property type="entry name" value="Nucleic acid-binding proteins"/>
    <property type="match status" value="1"/>
</dbReference>
<dbReference type="PROSITE" id="PS00056">
    <property type="entry name" value="RIBOSOMAL_S17"/>
    <property type="match status" value="1"/>
</dbReference>
<reference key="1">
    <citation type="journal article" date="2006" name="Genome Res.">
        <title>Skewed genomic variability in strains of the toxigenic bacterial pathogen, Clostridium perfringens.</title>
        <authorList>
            <person name="Myers G.S.A."/>
            <person name="Rasko D.A."/>
            <person name="Cheung J.K."/>
            <person name="Ravel J."/>
            <person name="Seshadri R."/>
            <person name="DeBoy R.T."/>
            <person name="Ren Q."/>
            <person name="Varga J."/>
            <person name="Awad M.M."/>
            <person name="Brinkac L.M."/>
            <person name="Daugherty S.C."/>
            <person name="Haft D.H."/>
            <person name="Dodson R.J."/>
            <person name="Madupu R."/>
            <person name="Nelson W.C."/>
            <person name="Rosovitz M.J."/>
            <person name="Sullivan S.A."/>
            <person name="Khouri H."/>
            <person name="Dimitrov G.I."/>
            <person name="Watkins K.L."/>
            <person name="Mulligan S."/>
            <person name="Benton J."/>
            <person name="Radune D."/>
            <person name="Fisher D.J."/>
            <person name="Atkins H.S."/>
            <person name="Hiscox T."/>
            <person name="Jost B.H."/>
            <person name="Billington S.J."/>
            <person name="Songer J.G."/>
            <person name="McClane B.A."/>
            <person name="Titball R.W."/>
            <person name="Rood J.I."/>
            <person name="Melville S.B."/>
            <person name="Paulsen I.T."/>
        </authorList>
    </citation>
    <scope>NUCLEOTIDE SEQUENCE [LARGE SCALE GENOMIC DNA]</scope>
    <source>
        <strain>ATCC 13124 / DSM 756 / JCM 1290 / NCIMB 6125 / NCTC 8237 / S 107 / Type A</strain>
    </source>
</reference>
<keyword id="KW-0687">Ribonucleoprotein</keyword>
<keyword id="KW-0689">Ribosomal protein</keyword>
<keyword id="KW-0694">RNA-binding</keyword>
<keyword id="KW-0699">rRNA-binding</keyword>
<organism>
    <name type="scientific">Clostridium perfringens (strain ATCC 13124 / DSM 756 / JCM 1290 / NCIMB 6125 / NCTC 8237 / Type A)</name>
    <dbReference type="NCBI Taxonomy" id="195103"/>
    <lineage>
        <taxon>Bacteria</taxon>
        <taxon>Bacillati</taxon>
        <taxon>Bacillota</taxon>
        <taxon>Clostridia</taxon>
        <taxon>Eubacteriales</taxon>
        <taxon>Clostridiaceae</taxon>
        <taxon>Clostridium</taxon>
    </lineage>
</organism>
<gene>
    <name evidence="1" type="primary">rpsQ</name>
    <name type="ordered locus">CPF_2705</name>
</gene>
<protein>
    <recommendedName>
        <fullName evidence="1">Small ribosomal subunit protein uS17</fullName>
    </recommendedName>
    <alternativeName>
        <fullName evidence="2">30S ribosomal protein S17</fullName>
    </alternativeName>
</protein>
<comment type="function">
    <text evidence="1">One of the primary rRNA binding proteins, it binds specifically to the 5'-end of 16S ribosomal RNA.</text>
</comment>
<comment type="subunit">
    <text evidence="1">Part of the 30S ribosomal subunit.</text>
</comment>
<comment type="similarity">
    <text evidence="1">Belongs to the universal ribosomal protein uS17 family.</text>
</comment>
<accession>Q0TMQ5</accession>
<name>RS17_CLOP1</name>